<comment type="function">
    <text evidence="1">Catalyzes the conversion of GTP to 2,5-diamino-6-ribosylamino-4(3H)-pyrimidinone 5'-phosphate (DARP), formate and pyrophosphate.</text>
</comment>
<comment type="catalytic activity">
    <reaction evidence="1">
        <text>GTP + 4 H2O = 2,5-diamino-6-hydroxy-4-(5-phosphoribosylamino)-pyrimidine + formate + 2 phosphate + 3 H(+)</text>
        <dbReference type="Rhea" id="RHEA:23704"/>
        <dbReference type="ChEBI" id="CHEBI:15377"/>
        <dbReference type="ChEBI" id="CHEBI:15378"/>
        <dbReference type="ChEBI" id="CHEBI:15740"/>
        <dbReference type="ChEBI" id="CHEBI:37565"/>
        <dbReference type="ChEBI" id="CHEBI:43474"/>
        <dbReference type="ChEBI" id="CHEBI:58614"/>
        <dbReference type="EC" id="3.5.4.25"/>
    </reaction>
</comment>
<comment type="cofactor">
    <cofactor evidence="1">
        <name>Zn(2+)</name>
        <dbReference type="ChEBI" id="CHEBI:29105"/>
    </cofactor>
    <text evidence="1">Binds 1 zinc ion per subunit.</text>
</comment>
<comment type="pathway">
    <text evidence="1">Cofactor biosynthesis; riboflavin biosynthesis; 5-amino-6-(D-ribitylamino)uracil from GTP: step 1/4.</text>
</comment>
<comment type="similarity">
    <text evidence="1">Belongs to the GTP cyclohydrolase II family.</text>
</comment>
<proteinExistence type="inferred from homology"/>
<organism>
    <name type="scientific">Shewanella sp. (strain MR-4)</name>
    <dbReference type="NCBI Taxonomy" id="60480"/>
    <lineage>
        <taxon>Bacteria</taxon>
        <taxon>Pseudomonadati</taxon>
        <taxon>Pseudomonadota</taxon>
        <taxon>Gammaproteobacteria</taxon>
        <taxon>Alteromonadales</taxon>
        <taxon>Shewanellaceae</taxon>
        <taxon>Shewanella</taxon>
    </lineage>
</organism>
<dbReference type="EC" id="3.5.4.25" evidence="1"/>
<dbReference type="EMBL" id="CP000446">
    <property type="protein sequence ID" value="ABI39509.1"/>
    <property type="molecule type" value="Genomic_DNA"/>
</dbReference>
<dbReference type="RefSeq" id="WP_011623192.1">
    <property type="nucleotide sequence ID" value="NC_008321.1"/>
</dbReference>
<dbReference type="SMR" id="Q0HHF8"/>
<dbReference type="KEGG" id="she:Shewmr4_2438"/>
<dbReference type="HOGENOM" id="CLU_020273_2_1_6"/>
<dbReference type="UniPathway" id="UPA00275">
    <property type="reaction ID" value="UER00400"/>
</dbReference>
<dbReference type="GO" id="GO:0005829">
    <property type="term" value="C:cytosol"/>
    <property type="evidence" value="ECO:0007669"/>
    <property type="project" value="TreeGrafter"/>
</dbReference>
<dbReference type="GO" id="GO:0005525">
    <property type="term" value="F:GTP binding"/>
    <property type="evidence" value="ECO:0007669"/>
    <property type="project" value="UniProtKB-KW"/>
</dbReference>
<dbReference type="GO" id="GO:0003935">
    <property type="term" value="F:GTP cyclohydrolase II activity"/>
    <property type="evidence" value="ECO:0007669"/>
    <property type="project" value="UniProtKB-UniRule"/>
</dbReference>
<dbReference type="GO" id="GO:0008270">
    <property type="term" value="F:zinc ion binding"/>
    <property type="evidence" value="ECO:0007669"/>
    <property type="project" value="UniProtKB-UniRule"/>
</dbReference>
<dbReference type="GO" id="GO:0009231">
    <property type="term" value="P:riboflavin biosynthetic process"/>
    <property type="evidence" value="ECO:0007669"/>
    <property type="project" value="UniProtKB-UniRule"/>
</dbReference>
<dbReference type="CDD" id="cd00641">
    <property type="entry name" value="GTP_cyclohydro2"/>
    <property type="match status" value="1"/>
</dbReference>
<dbReference type="FunFam" id="3.40.50.10990:FF:000002">
    <property type="entry name" value="GTP cyclohydrolase-2"/>
    <property type="match status" value="1"/>
</dbReference>
<dbReference type="Gene3D" id="3.40.50.10990">
    <property type="entry name" value="GTP cyclohydrolase II"/>
    <property type="match status" value="1"/>
</dbReference>
<dbReference type="HAMAP" id="MF_00179">
    <property type="entry name" value="RibA"/>
    <property type="match status" value="1"/>
</dbReference>
<dbReference type="InterPro" id="IPR032677">
    <property type="entry name" value="GTP_cyclohydro_II"/>
</dbReference>
<dbReference type="InterPro" id="IPR000926">
    <property type="entry name" value="RibA"/>
</dbReference>
<dbReference type="InterPro" id="IPR036144">
    <property type="entry name" value="RibA-like_sf"/>
</dbReference>
<dbReference type="NCBIfam" id="NF001591">
    <property type="entry name" value="PRK00393.1"/>
    <property type="match status" value="1"/>
</dbReference>
<dbReference type="NCBIfam" id="TIGR00505">
    <property type="entry name" value="ribA"/>
    <property type="match status" value="1"/>
</dbReference>
<dbReference type="PANTHER" id="PTHR21327:SF18">
    <property type="entry name" value="3,4-DIHYDROXY-2-BUTANONE 4-PHOSPHATE SYNTHASE"/>
    <property type="match status" value="1"/>
</dbReference>
<dbReference type="PANTHER" id="PTHR21327">
    <property type="entry name" value="GTP CYCLOHYDROLASE II-RELATED"/>
    <property type="match status" value="1"/>
</dbReference>
<dbReference type="Pfam" id="PF00925">
    <property type="entry name" value="GTP_cyclohydro2"/>
    <property type="match status" value="1"/>
</dbReference>
<dbReference type="SUPFAM" id="SSF142695">
    <property type="entry name" value="RibA-like"/>
    <property type="match status" value="1"/>
</dbReference>
<protein>
    <recommendedName>
        <fullName evidence="1">GTP cyclohydrolase-2</fullName>
        <ecNumber evidence="1">3.5.4.25</ecNumber>
    </recommendedName>
    <alternativeName>
        <fullName evidence="1">GTP cyclohydrolase II</fullName>
    </alternativeName>
</protein>
<reference key="1">
    <citation type="submission" date="2006-08" db="EMBL/GenBank/DDBJ databases">
        <title>Complete sequence of Shewanella sp. MR-4.</title>
        <authorList>
            <consortium name="US DOE Joint Genome Institute"/>
            <person name="Copeland A."/>
            <person name="Lucas S."/>
            <person name="Lapidus A."/>
            <person name="Barry K."/>
            <person name="Detter J.C."/>
            <person name="Glavina del Rio T."/>
            <person name="Hammon N."/>
            <person name="Israni S."/>
            <person name="Dalin E."/>
            <person name="Tice H."/>
            <person name="Pitluck S."/>
            <person name="Kiss H."/>
            <person name="Brettin T."/>
            <person name="Bruce D."/>
            <person name="Han C."/>
            <person name="Tapia R."/>
            <person name="Gilna P."/>
            <person name="Schmutz J."/>
            <person name="Larimer F."/>
            <person name="Land M."/>
            <person name="Hauser L."/>
            <person name="Kyrpides N."/>
            <person name="Mikhailova N."/>
            <person name="Nealson K."/>
            <person name="Konstantinidis K."/>
            <person name="Klappenbach J."/>
            <person name="Tiedje J."/>
            <person name="Richardson P."/>
        </authorList>
    </citation>
    <scope>NUCLEOTIDE SEQUENCE [LARGE SCALE GENOMIC DNA]</scope>
    <source>
        <strain>MR-4</strain>
    </source>
</reference>
<keyword id="KW-0342">GTP-binding</keyword>
<keyword id="KW-0378">Hydrolase</keyword>
<keyword id="KW-0479">Metal-binding</keyword>
<keyword id="KW-0547">Nucleotide-binding</keyword>
<keyword id="KW-0686">Riboflavin biosynthesis</keyword>
<keyword id="KW-0862">Zinc</keyword>
<accession>Q0HHF8</accession>
<evidence type="ECO:0000255" key="1">
    <source>
        <dbReference type="HAMAP-Rule" id="MF_00179"/>
    </source>
</evidence>
<name>RIBA_SHESM</name>
<sequence>MSIKYVATSKLPTPWGVFAMHGFEDTETGKEHVALTFGTLSSDAPVLGRIHSECLTGDALFSLRCDCGFQLQTAMQNIAETGSGFILYLRQEGRGIGLLNKIRAYELQDKGANTVEANEQLGFPADMRKYDMIQPMLEQIGVKHVRLMTNNPRKVKAMKEIGIEVVERVPLQVGKNRYNEAYLKTKSTELGHMMSEYHFTDED</sequence>
<feature type="chain" id="PRO_1000040586" description="GTP cyclohydrolase-2">
    <location>
        <begin position="1"/>
        <end position="203"/>
    </location>
</feature>
<feature type="active site" description="Proton acceptor" evidence="1">
    <location>
        <position position="126"/>
    </location>
</feature>
<feature type="active site" description="Nucleophile" evidence="1">
    <location>
        <position position="128"/>
    </location>
</feature>
<feature type="binding site" evidence="1">
    <location>
        <begin position="49"/>
        <end position="53"/>
    </location>
    <ligand>
        <name>GTP</name>
        <dbReference type="ChEBI" id="CHEBI:37565"/>
    </ligand>
</feature>
<feature type="binding site" evidence="1">
    <location>
        <position position="54"/>
    </location>
    <ligand>
        <name>Zn(2+)</name>
        <dbReference type="ChEBI" id="CHEBI:29105"/>
        <note>catalytic</note>
    </ligand>
</feature>
<feature type="binding site" evidence="1">
    <location>
        <position position="65"/>
    </location>
    <ligand>
        <name>Zn(2+)</name>
        <dbReference type="ChEBI" id="CHEBI:29105"/>
        <note>catalytic</note>
    </ligand>
</feature>
<feature type="binding site" evidence="1">
    <location>
        <position position="67"/>
    </location>
    <ligand>
        <name>Zn(2+)</name>
        <dbReference type="ChEBI" id="CHEBI:29105"/>
        <note>catalytic</note>
    </ligand>
</feature>
<feature type="binding site" evidence="1">
    <location>
        <position position="70"/>
    </location>
    <ligand>
        <name>GTP</name>
        <dbReference type="ChEBI" id="CHEBI:37565"/>
    </ligand>
</feature>
<feature type="binding site" evidence="1">
    <location>
        <begin position="92"/>
        <end position="94"/>
    </location>
    <ligand>
        <name>GTP</name>
        <dbReference type="ChEBI" id="CHEBI:37565"/>
    </ligand>
</feature>
<feature type="binding site" evidence="1">
    <location>
        <position position="114"/>
    </location>
    <ligand>
        <name>GTP</name>
        <dbReference type="ChEBI" id="CHEBI:37565"/>
    </ligand>
</feature>
<feature type="binding site" evidence="1">
    <location>
        <position position="149"/>
    </location>
    <ligand>
        <name>GTP</name>
        <dbReference type="ChEBI" id="CHEBI:37565"/>
    </ligand>
</feature>
<feature type="binding site" evidence="1">
    <location>
        <position position="154"/>
    </location>
    <ligand>
        <name>GTP</name>
        <dbReference type="ChEBI" id="CHEBI:37565"/>
    </ligand>
</feature>
<gene>
    <name evidence="1" type="primary">ribA</name>
    <name type="ordered locus">Shewmr4_2438</name>
</gene>